<protein>
    <recommendedName>
        <fullName>Cytosolic acyl coenzyme A thioester hydrolase</fullName>
        <ecNumber evidence="15">3.1.2.2</ecNumber>
    </recommendedName>
    <alternativeName>
        <fullName>Acyl-CoA thioesterase 7</fullName>
    </alternativeName>
    <alternativeName>
        <fullName>Brain acyl-CoA hydrolase</fullName>
        <shortName>BACH</shortName>
        <shortName evidence="8">hBACH</shortName>
    </alternativeName>
    <alternativeName>
        <fullName>CTE-IIa</fullName>
        <shortName>CTE-II</shortName>
    </alternativeName>
    <alternativeName>
        <fullName>Long chain acyl-CoA thioester hydrolase</fullName>
    </alternativeName>
</protein>
<reference key="1">
    <citation type="journal article" date="1999" name="J. Biochem.">
        <title>Purification, molecular cloning, and genomic organization of human brain long-chain acyl-CoA hydrolase.</title>
        <authorList>
            <person name="Yamada J."/>
            <person name="Kurata A."/>
            <person name="Hirata M."/>
            <person name="Taniguchi T."/>
            <person name="Takama H."/>
            <person name="Furihata T."/>
            <person name="Shiratori K."/>
            <person name="Iida N."/>
            <person name="Takagi-Sakuma M."/>
            <person name="Watanabe T."/>
            <person name="Kurosaki K."/>
            <person name="Endo T."/>
            <person name="Suga T."/>
        </authorList>
    </citation>
    <scope>NUCLEOTIDE SEQUENCE [MRNA] (ISOFORM 4)</scope>
    <scope>FUNCTION</scope>
    <scope>CATALYTIC ACTIVITY</scope>
    <scope>BIOPHYSICOCHEMICAL PROPERTIES</scope>
    <scope>PATHWAY</scope>
    <scope>TISSUE SPECIFICITY</scope>
    <source>
        <tissue>Brain</tissue>
    </source>
</reference>
<reference key="2">
    <citation type="journal article" date="2002" name="Biochem. Biophys. Res. Commun.">
        <title>Human brain acyl-CoA hydrolase isoforms encoded by a single gene.</title>
        <authorList>
            <person name="Yamada J."/>
            <person name="Kuramochi Y."/>
            <person name="Takagi M."/>
            <person name="Watanabe T."/>
            <person name="Suga T."/>
        </authorList>
    </citation>
    <scope>NUCLEOTIDE SEQUENCE [MRNA] (ISOFORMS 1; 2; 3; 5 AND 6)</scope>
    <scope>SUBCELLULAR LOCATION</scope>
    <scope>TISSUE SPECIFICITY</scope>
    <source>
        <tissue>Brain</tissue>
    </source>
</reference>
<reference key="3">
    <citation type="submission" date="1997-02" db="EMBL/GenBank/DDBJ databases">
        <authorList>
            <person name="Hajra A.K."/>
            <person name="Uhler M.D."/>
            <person name="Larkins L.K."/>
        </authorList>
    </citation>
    <scope>NUCLEOTIDE SEQUENCE [MRNA] (ISOFORM 4)</scope>
    <source>
        <tissue>Hippocampus</tissue>
    </source>
</reference>
<reference key="4">
    <citation type="submission" date="2003-05" db="EMBL/GenBank/DDBJ databases">
        <title>Cloning of human full-length CDSs in BD Creator(TM) system donor vector.</title>
        <authorList>
            <person name="Kalnine N."/>
            <person name="Chen X."/>
            <person name="Rolfs A."/>
            <person name="Halleck A."/>
            <person name="Hines L."/>
            <person name="Eisenstein S."/>
            <person name="Koundinya M."/>
            <person name="Raphael J."/>
            <person name="Moreira D."/>
            <person name="Kelley T."/>
            <person name="LaBaer J."/>
            <person name="Lin Y."/>
            <person name="Phelan M."/>
            <person name="Farmer A."/>
        </authorList>
    </citation>
    <scope>NUCLEOTIDE SEQUENCE [LARGE SCALE MRNA] (ISOFORM 4)</scope>
</reference>
<reference key="5">
    <citation type="journal article" date="2004" name="Nat. Genet.">
        <title>Complete sequencing and characterization of 21,243 full-length human cDNAs.</title>
        <authorList>
            <person name="Ota T."/>
            <person name="Suzuki Y."/>
            <person name="Nishikawa T."/>
            <person name="Otsuki T."/>
            <person name="Sugiyama T."/>
            <person name="Irie R."/>
            <person name="Wakamatsu A."/>
            <person name="Hayashi K."/>
            <person name="Sato H."/>
            <person name="Nagai K."/>
            <person name="Kimura K."/>
            <person name="Makita H."/>
            <person name="Sekine M."/>
            <person name="Obayashi M."/>
            <person name="Nishi T."/>
            <person name="Shibahara T."/>
            <person name="Tanaka T."/>
            <person name="Ishii S."/>
            <person name="Yamamoto J."/>
            <person name="Saito K."/>
            <person name="Kawai Y."/>
            <person name="Isono Y."/>
            <person name="Nakamura Y."/>
            <person name="Nagahari K."/>
            <person name="Murakami K."/>
            <person name="Yasuda T."/>
            <person name="Iwayanagi T."/>
            <person name="Wagatsuma M."/>
            <person name="Shiratori A."/>
            <person name="Sudo H."/>
            <person name="Hosoiri T."/>
            <person name="Kaku Y."/>
            <person name="Kodaira H."/>
            <person name="Kondo H."/>
            <person name="Sugawara M."/>
            <person name="Takahashi M."/>
            <person name="Kanda K."/>
            <person name="Yokoi T."/>
            <person name="Furuya T."/>
            <person name="Kikkawa E."/>
            <person name="Omura Y."/>
            <person name="Abe K."/>
            <person name="Kamihara K."/>
            <person name="Katsuta N."/>
            <person name="Sato K."/>
            <person name="Tanikawa M."/>
            <person name="Yamazaki M."/>
            <person name="Ninomiya K."/>
            <person name="Ishibashi T."/>
            <person name="Yamashita H."/>
            <person name="Murakawa K."/>
            <person name="Fujimori K."/>
            <person name="Tanai H."/>
            <person name="Kimata M."/>
            <person name="Watanabe M."/>
            <person name="Hiraoka S."/>
            <person name="Chiba Y."/>
            <person name="Ishida S."/>
            <person name="Ono Y."/>
            <person name="Takiguchi S."/>
            <person name="Watanabe S."/>
            <person name="Yosida M."/>
            <person name="Hotuta T."/>
            <person name="Kusano J."/>
            <person name="Kanehori K."/>
            <person name="Takahashi-Fujii A."/>
            <person name="Hara H."/>
            <person name="Tanase T.-O."/>
            <person name="Nomura Y."/>
            <person name="Togiya S."/>
            <person name="Komai F."/>
            <person name="Hara R."/>
            <person name="Takeuchi K."/>
            <person name="Arita M."/>
            <person name="Imose N."/>
            <person name="Musashino K."/>
            <person name="Yuuki H."/>
            <person name="Oshima A."/>
            <person name="Sasaki N."/>
            <person name="Aotsuka S."/>
            <person name="Yoshikawa Y."/>
            <person name="Matsunawa H."/>
            <person name="Ichihara T."/>
            <person name="Shiohata N."/>
            <person name="Sano S."/>
            <person name="Moriya S."/>
            <person name="Momiyama H."/>
            <person name="Satoh N."/>
            <person name="Takami S."/>
            <person name="Terashima Y."/>
            <person name="Suzuki O."/>
            <person name="Nakagawa S."/>
            <person name="Senoh A."/>
            <person name="Mizoguchi H."/>
            <person name="Goto Y."/>
            <person name="Shimizu F."/>
            <person name="Wakebe H."/>
            <person name="Hishigaki H."/>
            <person name="Watanabe T."/>
            <person name="Sugiyama A."/>
            <person name="Takemoto M."/>
            <person name="Kawakami B."/>
            <person name="Yamazaki M."/>
            <person name="Watanabe K."/>
            <person name="Kumagai A."/>
            <person name="Itakura S."/>
            <person name="Fukuzumi Y."/>
            <person name="Fujimori Y."/>
            <person name="Komiyama M."/>
            <person name="Tashiro H."/>
            <person name="Tanigami A."/>
            <person name="Fujiwara T."/>
            <person name="Ono T."/>
            <person name="Yamada K."/>
            <person name="Fujii Y."/>
            <person name="Ozaki K."/>
            <person name="Hirao M."/>
            <person name="Ohmori Y."/>
            <person name="Kawabata A."/>
            <person name="Hikiji T."/>
            <person name="Kobatake N."/>
            <person name="Inagaki H."/>
            <person name="Ikema Y."/>
            <person name="Okamoto S."/>
            <person name="Okitani R."/>
            <person name="Kawakami T."/>
            <person name="Noguchi S."/>
            <person name="Itoh T."/>
            <person name="Shigeta K."/>
            <person name="Senba T."/>
            <person name="Matsumura K."/>
            <person name="Nakajima Y."/>
            <person name="Mizuno T."/>
            <person name="Morinaga M."/>
            <person name="Sasaki M."/>
            <person name="Togashi T."/>
            <person name="Oyama M."/>
            <person name="Hata H."/>
            <person name="Watanabe M."/>
            <person name="Komatsu T."/>
            <person name="Mizushima-Sugano J."/>
            <person name="Satoh T."/>
            <person name="Shirai Y."/>
            <person name="Takahashi Y."/>
            <person name="Nakagawa K."/>
            <person name="Okumura K."/>
            <person name="Nagase T."/>
            <person name="Nomura N."/>
            <person name="Kikuchi H."/>
            <person name="Masuho Y."/>
            <person name="Yamashita R."/>
            <person name="Nakai K."/>
            <person name="Yada T."/>
            <person name="Nakamura Y."/>
            <person name="Ohara O."/>
            <person name="Isogai T."/>
            <person name="Sugano S."/>
        </authorList>
    </citation>
    <scope>NUCLEOTIDE SEQUENCE [LARGE SCALE MRNA] (ISOFORMS 1; 4; 5; 6 AND 7)</scope>
    <source>
        <tissue>Cerebellum</tissue>
        <tissue>Colon</tissue>
        <tissue>Placenta</tissue>
        <tissue>Stomach</tissue>
        <tissue>Subthalamic nucleus</tissue>
    </source>
</reference>
<reference key="6">
    <citation type="journal article" date="2006" name="Nature">
        <title>The DNA sequence and biological annotation of human chromosome 1.</title>
        <authorList>
            <person name="Gregory S.G."/>
            <person name="Barlow K.F."/>
            <person name="McLay K.E."/>
            <person name="Kaul R."/>
            <person name="Swarbreck D."/>
            <person name="Dunham A."/>
            <person name="Scott C.E."/>
            <person name="Howe K.L."/>
            <person name="Woodfine K."/>
            <person name="Spencer C.C.A."/>
            <person name="Jones M.C."/>
            <person name="Gillson C."/>
            <person name="Searle S."/>
            <person name="Zhou Y."/>
            <person name="Kokocinski F."/>
            <person name="McDonald L."/>
            <person name="Evans R."/>
            <person name="Phillips K."/>
            <person name="Atkinson A."/>
            <person name="Cooper R."/>
            <person name="Jones C."/>
            <person name="Hall R.E."/>
            <person name="Andrews T.D."/>
            <person name="Lloyd C."/>
            <person name="Ainscough R."/>
            <person name="Almeida J.P."/>
            <person name="Ambrose K.D."/>
            <person name="Anderson F."/>
            <person name="Andrew R.W."/>
            <person name="Ashwell R.I.S."/>
            <person name="Aubin K."/>
            <person name="Babbage A.K."/>
            <person name="Bagguley C.L."/>
            <person name="Bailey J."/>
            <person name="Beasley H."/>
            <person name="Bethel G."/>
            <person name="Bird C.P."/>
            <person name="Bray-Allen S."/>
            <person name="Brown J.Y."/>
            <person name="Brown A.J."/>
            <person name="Buckley D."/>
            <person name="Burton J."/>
            <person name="Bye J."/>
            <person name="Carder C."/>
            <person name="Chapman J.C."/>
            <person name="Clark S.Y."/>
            <person name="Clarke G."/>
            <person name="Clee C."/>
            <person name="Cobley V."/>
            <person name="Collier R.E."/>
            <person name="Corby N."/>
            <person name="Coville G.J."/>
            <person name="Davies J."/>
            <person name="Deadman R."/>
            <person name="Dunn M."/>
            <person name="Earthrowl M."/>
            <person name="Ellington A.G."/>
            <person name="Errington H."/>
            <person name="Frankish A."/>
            <person name="Frankland J."/>
            <person name="French L."/>
            <person name="Garner P."/>
            <person name="Garnett J."/>
            <person name="Gay L."/>
            <person name="Ghori M.R.J."/>
            <person name="Gibson R."/>
            <person name="Gilby L.M."/>
            <person name="Gillett W."/>
            <person name="Glithero R.J."/>
            <person name="Grafham D.V."/>
            <person name="Griffiths C."/>
            <person name="Griffiths-Jones S."/>
            <person name="Grocock R."/>
            <person name="Hammond S."/>
            <person name="Harrison E.S.I."/>
            <person name="Hart E."/>
            <person name="Haugen E."/>
            <person name="Heath P.D."/>
            <person name="Holmes S."/>
            <person name="Holt K."/>
            <person name="Howden P.J."/>
            <person name="Hunt A.R."/>
            <person name="Hunt S.E."/>
            <person name="Hunter G."/>
            <person name="Isherwood J."/>
            <person name="James R."/>
            <person name="Johnson C."/>
            <person name="Johnson D."/>
            <person name="Joy A."/>
            <person name="Kay M."/>
            <person name="Kershaw J.K."/>
            <person name="Kibukawa M."/>
            <person name="Kimberley A.M."/>
            <person name="King A."/>
            <person name="Knights A.J."/>
            <person name="Lad H."/>
            <person name="Laird G."/>
            <person name="Lawlor S."/>
            <person name="Leongamornlert D.A."/>
            <person name="Lloyd D.M."/>
            <person name="Loveland J."/>
            <person name="Lovell J."/>
            <person name="Lush M.J."/>
            <person name="Lyne R."/>
            <person name="Martin S."/>
            <person name="Mashreghi-Mohammadi M."/>
            <person name="Matthews L."/>
            <person name="Matthews N.S.W."/>
            <person name="McLaren S."/>
            <person name="Milne S."/>
            <person name="Mistry S."/>
            <person name="Moore M.J.F."/>
            <person name="Nickerson T."/>
            <person name="O'Dell C.N."/>
            <person name="Oliver K."/>
            <person name="Palmeiri A."/>
            <person name="Palmer S.A."/>
            <person name="Parker A."/>
            <person name="Patel D."/>
            <person name="Pearce A.V."/>
            <person name="Peck A.I."/>
            <person name="Pelan S."/>
            <person name="Phelps K."/>
            <person name="Phillimore B.J."/>
            <person name="Plumb R."/>
            <person name="Rajan J."/>
            <person name="Raymond C."/>
            <person name="Rouse G."/>
            <person name="Saenphimmachak C."/>
            <person name="Sehra H.K."/>
            <person name="Sheridan E."/>
            <person name="Shownkeen R."/>
            <person name="Sims S."/>
            <person name="Skuce C.D."/>
            <person name="Smith M."/>
            <person name="Steward C."/>
            <person name="Subramanian S."/>
            <person name="Sycamore N."/>
            <person name="Tracey A."/>
            <person name="Tromans A."/>
            <person name="Van Helmond Z."/>
            <person name="Wall M."/>
            <person name="Wallis J.M."/>
            <person name="White S."/>
            <person name="Whitehead S.L."/>
            <person name="Wilkinson J.E."/>
            <person name="Willey D.L."/>
            <person name="Williams H."/>
            <person name="Wilming L."/>
            <person name="Wray P.W."/>
            <person name="Wu Z."/>
            <person name="Coulson A."/>
            <person name="Vaudin M."/>
            <person name="Sulston J.E."/>
            <person name="Durbin R.M."/>
            <person name="Hubbard T."/>
            <person name="Wooster R."/>
            <person name="Dunham I."/>
            <person name="Carter N.P."/>
            <person name="McVean G."/>
            <person name="Ross M.T."/>
            <person name="Harrow J."/>
            <person name="Olson M.V."/>
            <person name="Beck S."/>
            <person name="Rogers J."/>
            <person name="Bentley D.R."/>
        </authorList>
    </citation>
    <scope>NUCLEOTIDE SEQUENCE [LARGE SCALE GENOMIC DNA]</scope>
</reference>
<reference key="7">
    <citation type="submission" date="2005-07" db="EMBL/GenBank/DDBJ databases">
        <authorList>
            <person name="Mural R.J."/>
            <person name="Istrail S."/>
            <person name="Sutton G.G."/>
            <person name="Florea L."/>
            <person name="Halpern A.L."/>
            <person name="Mobarry C.M."/>
            <person name="Lippert R."/>
            <person name="Walenz B."/>
            <person name="Shatkay H."/>
            <person name="Dew I."/>
            <person name="Miller J.R."/>
            <person name="Flanigan M.J."/>
            <person name="Edwards N.J."/>
            <person name="Bolanos R."/>
            <person name="Fasulo D."/>
            <person name="Halldorsson B.V."/>
            <person name="Hannenhalli S."/>
            <person name="Turner R."/>
            <person name="Yooseph S."/>
            <person name="Lu F."/>
            <person name="Nusskern D.R."/>
            <person name="Shue B.C."/>
            <person name="Zheng X.H."/>
            <person name="Zhong F."/>
            <person name="Delcher A.L."/>
            <person name="Huson D.H."/>
            <person name="Kravitz S.A."/>
            <person name="Mouchard L."/>
            <person name="Reinert K."/>
            <person name="Remington K.A."/>
            <person name="Clark A.G."/>
            <person name="Waterman M.S."/>
            <person name="Eichler E.E."/>
            <person name="Adams M.D."/>
            <person name="Hunkapiller M.W."/>
            <person name="Myers E.W."/>
            <person name="Venter J.C."/>
        </authorList>
    </citation>
    <scope>NUCLEOTIDE SEQUENCE [LARGE SCALE GENOMIC DNA]</scope>
</reference>
<reference key="8">
    <citation type="journal article" date="2004" name="Genome Res.">
        <title>The status, quality, and expansion of the NIH full-length cDNA project: the Mammalian Gene Collection (MGC).</title>
        <authorList>
            <consortium name="The MGC Project Team"/>
        </authorList>
    </citation>
    <scope>NUCLEOTIDE SEQUENCE [LARGE SCALE MRNA] (ISOFORM 4)</scope>
    <source>
        <tissue>Brain</tissue>
    </source>
</reference>
<reference key="9">
    <citation type="submission" date="2009-01" db="UniProtKB">
        <authorList>
            <person name="Lubec G."/>
            <person name="Chen W.-Q."/>
        </authorList>
    </citation>
    <scope>PROTEIN SEQUENCE OF 79-90</scope>
    <scope>IDENTIFICATION BY MASS SPECTROMETRY</scope>
    <source>
        <tissue>Fetal brain</tissue>
    </source>
</reference>
<reference key="10">
    <citation type="journal article" date="2009" name="Science">
        <title>Lysine acetylation targets protein complexes and co-regulates major cellular functions.</title>
        <authorList>
            <person name="Choudhary C."/>
            <person name="Kumar C."/>
            <person name="Gnad F."/>
            <person name="Nielsen M.L."/>
            <person name="Rehman M."/>
            <person name="Walther T.C."/>
            <person name="Olsen J.V."/>
            <person name="Mann M."/>
        </authorList>
    </citation>
    <scope>ACETYLATION [LARGE SCALE ANALYSIS] AT LYS-168; LYS-198 AND LYS-283</scope>
    <scope>IDENTIFICATION BY MASS SPECTROMETRY [LARGE SCALE ANALYSIS]</scope>
</reference>
<reference key="11">
    <citation type="journal article" date="2011" name="BMC Syst. Biol.">
        <title>Initial characterization of the human central proteome.</title>
        <authorList>
            <person name="Burkard T.R."/>
            <person name="Planyavsky M."/>
            <person name="Kaupe I."/>
            <person name="Breitwieser F.P."/>
            <person name="Buerckstuemmer T."/>
            <person name="Bennett K.L."/>
            <person name="Superti-Furga G."/>
            <person name="Colinge J."/>
        </authorList>
    </citation>
    <scope>IDENTIFICATION BY MASS SPECTROMETRY [LARGE SCALE ANALYSIS]</scope>
</reference>
<reference key="12">
    <citation type="submission" date="2007-08" db="PDB data bank">
        <title>Human acyl-CoA thioesterase 7.</title>
        <authorList>
            <consortium name="Structural genomics consortium (SGC)"/>
        </authorList>
    </citation>
    <scope>X-RAY CRYSTALLOGRAPHY (2.8 ANGSTROMS) OF 209-378</scope>
</reference>
<name>BACH_HUMAN</name>
<keyword id="KW-0002">3D-structure</keyword>
<keyword id="KW-0007">Acetylation</keyword>
<keyword id="KW-0025">Alternative splicing</keyword>
<keyword id="KW-0963">Cytoplasm</keyword>
<keyword id="KW-0903">Direct protein sequencing</keyword>
<keyword id="KW-0276">Fatty acid metabolism</keyword>
<keyword id="KW-0378">Hydrolase</keyword>
<keyword id="KW-0443">Lipid metabolism</keyword>
<keyword id="KW-0496">Mitochondrion</keyword>
<keyword id="KW-1267">Proteomics identification</keyword>
<keyword id="KW-1185">Reference proteome</keyword>
<keyword id="KW-0677">Repeat</keyword>
<keyword id="KW-0719">Serine esterase</keyword>
<dbReference type="EC" id="3.1.2.2" evidence="15"/>
<dbReference type="EMBL" id="D88894">
    <property type="protein sequence ID" value="BAA24350.1"/>
    <property type="molecule type" value="mRNA"/>
</dbReference>
<dbReference type="EMBL" id="AB074415">
    <property type="protein sequence ID" value="BAC20174.1"/>
    <property type="molecule type" value="mRNA"/>
</dbReference>
<dbReference type="EMBL" id="AB074416">
    <property type="protein sequence ID" value="BAC20175.1"/>
    <property type="molecule type" value="mRNA"/>
</dbReference>
<dbReference type="EMBL" id="AB074417">
    <property type="protein sequence ID" value="BAC20176.1"/>
    <property type="molecule type" value="mRNA"/>
</dbReference>
<dbReference type="EMBL" id="AB074418">
    <property type="protein sequence ID" value="BAC20177.1"/>
    <property type="molecule type" value="mRNA"/>
</dbReference>
<dbReference type="EMBL" id="AB074419">
    <property type="protein sequence ID" value="BAC20178.1"/>
    <property type="molecule type" value="mRNA"/>
</dbReference>
<dbReference type="EMBL" id="U91316">
    <property type="protein sequence ID" value="AAB61211.1"/>
    <property type="status" value="ALT_FRAME"/>
    <property type="molecule type" value="mRNA"/>
</dbReference>
<dbReference type="EMBL" id="BT006888">
    <property type="protein sequence ID" value="AAP35534.1"/>
    <property type="molecule type" value="mRNA"/>
</dbReference>
<dbReference type="EMBL" id="AK289572">
    <property type="protein sequence ID" value="BAF82261.1"/>
    <property type="molecule type" value="mRNA"/>
</dbReference>
<dbReference type="EMBL" id="AK290097">
    <property type="protein sequence ID" value="BAF82786.1"/>
    <property type="molecule type" value="mRNA"/>
</dbReference>
<dbReference type="EMBL" id="AK291583">
    <property type="protein sequence ID" value="BAF84272.1"/>
    <property type="molecule type" value="mRNA"/>
</dbReference>
<dbReference type="EMBL" id="AK292202">
    <property type="protein sequence ID" value="BAF84891.1"/>
    <property type="molecule type" value="mRNA"/>
</dbReference>
<dbReference type="EMBL" id="AK057168">
    <property type="protein sequence ID" value="BAG51874.1"/>
    <property type="molecule type" value="mRNA"/>
</dbReference>
<dbReference type="EMBL" id="AL031847">
    <property type="status" value="NOT_ANNOTATED_CDS"/>
    <property type="molecule type" value="Genomic_DNA"/>
</dbReference>
<dbReference type="EMBL" id="AL031848">
    <property type="status" value="NOT_ANNOTATED_CDS"/>
    <property type="molecule type" value="Genomic_DNA"/>
</dbReference>
<dbReference type="EMBL" id="CH471130">
    <property type="protein sequence ID" value="EAW71528.1"/>
    <property type="molecule type" value="Genomic_DNA"/>
</dbReference>
<dbReference type="EMBL" id="CH471130">
    <property type="protein sequence ID" value="EAW71529.1"/>
    <property type="molecule type" value="Genomic_DNA"/>
</dbReference>
<dbReference type="EMBL" id="CH471130">
    <property type="protein sequence ID" value="EAW71530.1"/>
    <property type="molecule type" value="Genomic_DNA"/>
</dbReference>
<dbReference type="EMBL" id="BC017365">
    <property type="protein sequence ID" value="AAH17365.2"/>
    <property type="status" value="ALT_INIT"/>
    <property type="molecule type" value="mRNA"/>
</dbReference>
<dbReference type="CCDS" id="CCDS30573.1">
    <molecule id="O00154-7"/>
</dbReference>
<dbReference type="CCDS" id="CCDS65.1">
    <molecule id="O00154-1"/>
</dbReference>
<dbReference type="CCDS" id="CCDS66.1">
    <molecule id="O00154-5"/>
</dbReference>
<dbReference type="CCDS" id="CCDS67.1">
    <molecule id="O00154-6"/>
</dbReference>
<dbReference type="PIR" id="JC7161">
    <property type="entry name" value="JC7161"/>
</dbReference>
<dbReference type="RefSeq" id="NP_009205.3">
    <molecule id="O00154-7"/>
    <property type="nucleotide sequence ID" value="NM_007274.3"/>
</dbReference>
<dbReference type="RefSeq" id="NP_863654.1">
    <molecule id="O00154-1"/>
    <property type="nucleotide sequence ID" value="NM_181864.3"/>
</dbReference>
<dbReference type="RefSeq" id="NP_863655.1">
    <molecule id="O00154-5"/>
    <property type="nucleotide sequence ID" value="NM_181865.3"/>
</dbReference>
<dbReference type="RefSeq" id="NP_863656.1">
    <molecule id="O00154-6"/>
    <property type="nucleotide sequence ID" value="NM_181866.3"/>
</dbReference>
<dbReference type="PDB" id="2QQ2">
    <property type="method" value="X-ray"/>
    <property type="resolution" value="2.80 A"/>
    <property type="chains" value="A/B/C/D/E/F/G/H/I/J/K/L=209-378"/>
</dbReference>
<dbReference type="PDBsum" id="2QQ2"/>
<dbReference type="SMR" id="O00154"/>
<dbReference type="BioGRID" id="116460">
    <property type="interactions" value="182"/>
</dbReference>
<dbReference type="FunCoup" id="O00154">
    <property type="interactions" value="978"/>
</dbReference>
<dbReference type="IntAct" id="O00154">
    <property type="interactions" value="69"/>
</dbReference>
<dbReference type="MINT" id="O00154"/>
<dbReference type="STRING" id="9606.ENSP00000367086"/>
<dbReference type="GlyGen" id="O00154">
    <property type="glycosylation" value="1 site, 1 O-linked glycan (1 site)"/>
</dbReference>
<dbReference type="iPTMnet" id="O00154"/>
<dbReference type="MetOSite" id="O00154"/>
<dbReference type="PhosphoSitePlus" id="O00154"/>
<dbReference type="SwissPalm" id="O00154"/>
<dbReference type="BioMuta" id="ACOT7"/>
<dbReference type="CPTAC" id="CPTAC-303"/>
<dbReference type="CPTAC" id="CPTAC-304"/>
<dbReference type="jPOST" id="O00154"/>
<dbReference type="MassIVE" id="O00154"/>
<dbReference type="PaxDb" id="9606-ENSP00000367086"/>
<dbReference type="PeptideAtlas" id="O00154"/>
<dbReference type="ProteomicsDB" id="47737">
    <molecule id="O00154-1"/>
</dbReference>
<dbReference type="ProteomicsDB" id="47738">
    <molecule id="O00154-2"/>
</dbReference>
<dbReference type="ProteomicsDB" id="47739">
    <molecule id="O00154-3"/>
</dbReference>
<dbReference type="ProteomicsDB" id="47740">
    <molecule id="O00154-4"/>
</dbReference>
<dbReference type="ProteomicsDB" id="47741">
    <molecule id="O00154-5"/>
</dbReference>
<dbReference type="ProteomicsDB" id="47742">
    <molecule id="O00154-6"/>
</dbReference>
<dbReference type="Pumba" id="O00154"/>
<dbReference type="TopDownProteomics" id="O00154-1">
    <molecule id="O00154-1"/>
</dbReference>
<dbReference type="Antibodypedia" id="12967">
    <property type="antibodies" value="160 antibodies from 22 providers"/>
</dbReference>
<dbReference type="DNASU" id="11332"/>
<dbReference type="Ensembl" id="ENST00000361521.9">
    <molecule id="O00154-7"/>
    <property type="protein sequence ID" value="ENSP00000354615.4"/>
    <property type="gene ID" value="ENSG00000097021.21"/>
</dbReference>
<dbReference type="Ensembl" id="ENST00000377842.7">
    <molecule id="O00154-6"/>
    <property type="protein sequence ID" value="ENSP00000367073.3"/>
    <property type="gene ID" value="ENSG00000097021.21"/>
</dbReference>
<dbReference type="Ensembl" id="ENST00000377845.7">
    <molecule id="O00154-5"/>
    <property type="protein sequence ID" value="ENSP00000367076.3"/>
    <property type="gene ID" value="ENSG00000097021.21"/>
</dbReference>
<dbReference type="Ensembl" id="ENST00000377855.6">
    <molecule id="O00154-1"/>
    <property type="protein sequence ID" value="ENSP00000367086.2"/>
    <property type="gene ID" value="ENSG00000097021.21"/>
</dbReference>
<dbReference type="Ensembl" id="ENST00000377860.8">
    <molecule id="O00154-3"/>
    <property type="protein sequence ID" value="ENSP00000367091.4"/>
    <property type="gene ID" value="ENSG00000097021.21"/>
</dbReference>
<dbReference type="Ensembl" id="ENST00000418124.5">
    <molecule id="O00154-2"/>
    <property type="protein sequence ID" value="ENSP00000402532.1"/>
    <property type="gene ID" value="ENSG00000097021.21"/>
</dbReference>
<dbReference type="Ensembl" id="ENST00000608083.5">
    <molecule id="O00154-4"/>
    <property type="protein sequence ID" value="ENSP00000476610.1"/>
    <property type="gene ID" value="ENSG00000097021.21"/>
</dbReference>
<dbReference type="GeneID" id="11332"/>
<dbReference type="KEGG" id="hsa:11332"/>
<dbReference type="MANE-Select" id="ENST00000361521.9">
    <molecule id="O00154-7"/>
    <property type="protein sequence ID" value="ENSP00000354615.4"/>
    <property type="RefSeq nucleotide sequence ID" value="NM_007274.4"/>
    <property type="RefSeq protein sequence ID" value="NP_009205.3"/>
</dbReference>
<dbReference type="UCSC" id="uc001amq.4">
    <molecule id="O00154-1"/>
    <property type="organism name" value="human"/>
</dbReference>
<dbReference type="AGR" id="HGNC:24157"/>
<dbReference type="CTD" id="11332"/>
<dbReference type="DisGeNET" id="11332"/>
<dbReference type="GeneCards" id="ACOT7"/>
<dbReference type="HGNC" id="HGNC:24157">
    <property type="gene designation" value="ACOT7"/>
</dbReference>
<dbReference type="HPA" id="ENSG00000097021">
    <property type="expression patterns" value="Tissue enhanced (brain)"/>
</dbReference>
<dbReference type="MalaCards" id="ACOT7"/>
<dbReference type="MIM" id="602587">
    <property type="type" value="gene"/>
</dbReference>
<dbReference type="neXtProt" id="NX_O00154"/>
<dbReference type="OpenTargets" id="ENSG00000097021"/>
<dbReference type="PharmGKB" id="PA142672655"/>
<dbReference type="VEuPathDB" id="HostDB:ENSG00000097021"/>
<dbReference type="eggNOG" id="KOG2763">
    <property type="taxonomic scope" value="Eukaryota"/>
</dbReference>
<dbReference type="GeneTree" id="ENSGT00940000155229"/>
<dbReference type="HOGENOM" id="CLU_050164_0_0_1"/>
<dbReference type="InParanoid" id="O00154"/>
<dbReference type="OMA" id="PTDVNWG"/>
<dbReference type="OrthoDB" id="331699at2759"/>
<dbReference type="PAN-GO" id="O00154">
    <property type="GO annotations" value="6 GO annotations based on evolutionary models"/>
</dbReference>
<dbReference type="PhylomeDB" id="O00154"/>
<dbReference type="TreeFam" id="TF329579"/>
<dbReference type="BioCyc" id="MetaCyc:HS01875-MONOMER"/>
<dbReference type="BRENDA" id="3.1.2.2">
    <property type="organism ID" value="2681"/>
</dbReference>
<dbReference type="BRENDA" id="3.1.2.20">
    <property type="organism ID" value="2681"/>
</dbReference>
<dbReference type="PathwayCommons" id="O00154"/>
<dbReference type="Reactome" id="R-HSA-77289">
    <property type="pathway name" value="Mitochondrial Fatty Acid Beta-Oxidation"/>
</dbReference>
<dbReference type="SABIO-RK" id="O00154"/>
<dbReference type="SignaLink" id="O00154"/>
<dbReference type="UniPathway" id="UPA00199"/>
<dbReference type="BioGRID-ORCS" id="11332">
    <property type="hits" value="10 hits in 1154 CRISPR screens"/>
</dbReference>
<dbReference type="ChiTaRS" id="ACOT7">
    <property type="organism name" value="human"/>
</dbReference>
<dbReference type="EvolutionaryTrace" id="O00154"/>
<dbReference type="GeneWiki" id="ACOT7"/>
<dbReference type="GenomeRNAi" id="11332"/>
<dbReference type="Pharos" id="O00154">
    <property type="development level" value="Tbio"/>
</dbReference>
<dbReference type="PRO" id="PR:O00154"/>
<dbReference type="Proteomes" id="UP000005640">
    <property type="component" value="Chromosome 1"/>
</dbReference>
<dbReference type="RNAct" id="O00154">
    <property type="molecule type" value="protein"/>
</dbReference>
<dbReference type="Bgee" id="ENSG00000097021">
    <property type="expression patterns" value="Expressed in lateral nuclear group of thalamus and 183 other cell types or tissues"/>
</dbReference>
<dbReference type="ExpressionAtlas" id="O00154">
    <property type="expression patterns" value="baseline and differential"/>
</dbReference>
<dbReference type="GO" id="GO:0005737">
    <property type="term" value="C:cytoplasm"/>
    <property type="evidence" value="ECO:0000318"/>
    <property type="project" value="GO_Central"/>
</dbReference>
<dbReference type="GO" id="GO:0005829">
    <property type="term" value="C:cytosol"/>
    <property type="evidence" value="ECO:0000314"/>
    <property type="project" value="BHF-UCL"/>
</dbReference>
<dbReference type="GO" id="GO:0070062">
    <property type="term" value="C:extracellular exosome"/>
    <property type="evidence" value="ECO:0007005"/>
    <property type="project" value="UniProtKB"/>
</dbReference>
<dbReference type="GO" id="GO:0005739">
    <property type="term" value="C:mitochondrion"/>
    <property type="evidence" value="ECO:0007669"/>
    <property type="project" value="UniProtKB-SubCell"/>
</dbReference>
<dbReference type="GO" id="GO:0005654">
    <property type="term" value="C:nucleoplasm"/>
    <property type="evidence" value="ECO:0000314"/>
    <property type="project" value="HPA"/>
</dbReference>
<dbReference type="GO" id="GO:0052689">
    <property type="term" value="F:carboxylic ester hydrolase activity"/>
    <property type="evidence" value="ECO:0007669"/>
    <property type="project" value="UniProtKB-KW"/>
</dbReference>
<dbReference type="GO" id="GO:0000062">
    <property type="term" value="F:fatty-acyl-CoA binding"/>
    <property type="evidence" value="ECO:0000314"/>
    <property type="project" value="BHF-UCL"/>
</dbReference>
<dbReference type="GO" id="GO:0036042">
    <property type="term" value="F:long-chain fatty acyl-CoA binding"/>
    <property type="evidence" value="ECO:0000314"/>
    <property type="project" value="BHF-UCL"/>
</dbReference>
<dbReference type="GO" id="GO:0052816">
    <property type="term" value="F:long-chain fatty acyl-CoA hydrolase activity"/>
    <property type="evidence" value="ECO:0000314"/>
    <property type="project" value="BHF-UCL"/>
</dbReference>
<dbReference type="GO" id="GO:0042803">
    <property type="term" value="F:protein homodimerization activity"/>
    <property type="evidence" value="ECO:0000353"/>
    <property type="project" value="BHF-UCL"/>
</dbReference>
<dbReference type="GO" id="GO:0006637">
    <property type="term" value="P:acyl-CoA metabolic process"/>
    <property type="evidence" value="ECO:0000318"/>
    <property type="project" value="GO_Central"/>
</dbReference>
<dbReference type="GO" id="GO:0015937">
    <property type="term" value="P:coenzyme A biosynthetic process"/>
    <property type="evidence" value="ECO:0000314"/>
    <property type="project" value="BHF-UCL"/>
</dbReference>
<dbReference type="GO" id="GO:0009062">
    <property type="term" value="P:fatty acid catabolic process"/>
    <property type="evidence" value="ECO:0000318"/>
    <property type="project" value="GO_Central"/>
</dbReference>
<dbReference type="GO" id="GO:0036116">
    <property type="term" value="P:long-chain fatty-acyl-CoA catabolic process"/>
    <property type="evidence" value="ECO:0000314"/>
    <property type="project" value="BHF-UCL"/>
</dbReference>
<dbReference type="GO" id="GO:0051792">
    <property type="term" value="P:medium-chain fatty acid biosynthetic process"/>
    <property type="evidence" value="ECO:0000314"/>
    <property type="project" value="BHF-UCL"/>
</dbReference>
<dbReference type="GO" id="GO:0036114">
    <property type="term" value="P:medium-chain fatty-acyl-CoA catabolic process"/>
    <property type="evidence" value="ECO:0000314"/>
    <property type="project" value="BHF-UCL"/>
</dbReference>
<dbReference type="GO" id="GO:1900535">
    <property type="term" value="P:palmitic acid biosynthetic process"/>
    <property type="evidence" value="ECO:0000314"/>
    <property type="project" value="BHF-UCL"/>
</dbReference>
<dbReference type="CDD" id="cd03442">
    <property type="entry name" value="BFIT_BACH"/>
    <property type="match status" value="2"/>
</dbReference>
<dbReference type="FunFam" id="3.10.129.10:FF:000009">
    <property type="entry name" value="Cytosolic acyl coenzyme A thioester hydrolase"/>
    <property type="match status" value="1"/>
</dbReference>
<dbReference type="FunFam" id="3.10.129.10:FF:000010">
    <property type="entry name" value="Cytosolic acyl coenzyme A thioester hydrolase"/>
    <property type="match status" value="1"/>
</dbReference>
<dbReference type="Gene3D" id="3.10.129.10">
    <property type="entry name" value="Hotdog Thioesterase"/>
    <property type="match status" value="2"/>
</dbReference>
<dbReference type="InterPro" id="IPR040170">
    <property type="entry name" value="Cytosol_ACT"/>
</dbReference>
<dbReference type="InterPro" id="IPR033120">
    <property type="entry name" value="HOTDOG_ACOT"/>
</dbReference>
<dbReference type="InterPro" id="IPR029069">
    <property type="entry name" value="HotDog_dom_sf"/>
</dbReference>
<dbReference type="InterPro" id="IPR006683">
    <property type="entry name" value="Thioestr_dom"/>
</dbReference>
<dbReference type="PANTHER" id="PTHR11049">
    <property type="entry name" value="ACYL COENZYME A THIOESTER HYDROLASE"/>
    <property type="match status" value="1"/>
</dbReference>
<dbReference type="PANTHER" id="PTHR11049:SF27">
    <property type="entry name" value="CYTOSOLIC ACYL COENZYME A THIOESTER HYDROLASE"/>
    <property type="match status" value="1"/>
</dbReference>
<dbReference type="Pfam" id="PF03061">
    <property type="entry name" value="4HBT"/>
    <property type="match status" value="2"/>
</dbReference>
<dbReference type="SUPFAM" id="SSF54637">
    <property type="entry name" value="Thioesterase/thiol ester dehydrase-isomerase"/>
    <property type="match status" value="2"/>
</dbReference>
<dbReference type="PROSITE" id="PS51770">
    <property type="entry name" value="HOTDOG_ACOT"/>
    <property type="match status" value="2"/>
</dbReference>
<sequence>MKLLARALRLCEFGRQASSRRLVAGQGCVGPRRGCCAPVQVVGPRADLPPCGACITGRIMRPDDANVAGNVHGGTILKMIEEAGAIISTRHCNSQNGERCVAALARVERTDFLSPMCIGEVAHVSAEITYTSKHSVEVQVNVMSENILTGAKKLTNKATLWYVPLSLKNVDKVLEVPPVVYSRQEQEEEGRKRYEAQKLERMETKWRNGDIVQPVLNPEPNTVSYSQSSLIHLVGPSDCTLHGFVHGGVTMKLMDEVAGIVAARHCKTNIVTASVDAINFHDKIRKGCVITISGRMTFTSNKSMEIEVLVDADPVVDSSQKRYRAASAFFTYVSLSQEGRSLPVPQLVPETEDEKKRFEEGKGRYLQMKAKRQGHAEPQP</sequence>
<organism>
    <name type="scientific">Homo sapiens</name>
    <name type="common">Human</name>
    <dbReference type="NCBI Taxonomy" id="9606"/>
    <lineage>
        <taxon>Eukaryota</taxon>
        <taxon>Metazoa</taxon>
        <taxon>Chordata</taxon>
        <taxon>Craniata</taxon>
        <taxon>Vertebrata</taxon>
        <taxon>Euteleostomi</taxon>
        <taxon>Mammalia</taxon>
        <taxon>Eutheria</taxon>
        <taxon>Euarchontoglires</taxon>
        <taxon>Primates</taxon>
        <taxon>Haplorrhini</taxon>
        <taxon>Catarrhini</taxon>
        <taxon>Hominidae</taxon>
        <taxon>Homo</taxon>
    </lineage>
</organism>
<feature type="chain" id="PRO_0000053806" description="Cytosolic acyl coenzyme A thioester hydrolase">
    <location>
        <begin position="1"/>
        <end position="380"/>
    </location>
</feature>
<feature type="domain" description="HotDog ACOT-type 1" evidence="4">
    <location>
        <begin position="50"/>
        <end position="168"/>
    </location>
</feature>
<feature type="domain" description="HotDog ACOT-type 2" evidence="4">
    <location>
        <begin position="224"/>
        <end position="338"/>
    </location>
</feature>
<feature type="region of interest" description="Disordered" evidence="5">
    <location>
        <begin position="350"/>
        <end position="380"/>
    </location>
</feature>
<feature type="compositionally biased region" description="Basic and acidic residues" evidence="5">
    <location>
        <begin position="353"/>
        <end position="363"/>
    </location>
</feature>
<feature type="active site" evidence="1">
    <location>
        <position position="66"/>
    </location>
</feature>
<feature type="active site" evidence="1">
    <location>
        <position position="255"/>
    </location>
</feature>
<feature type="modified residue" description="N6-acetyllysine" evidence="17">
    <location>
        <position position="168"/>
    </location>
</feature>
<feature type="modified residue" description="N6-acetyllysine" evidence="17">
    <location>
        <position position="198"/>
    </location>
</feature>
<feature type="modified residue" description="N6-acetyllysine" evidence="17">
    <location>
        <position position="283"/>
    </location>
</feature>
<feature type="splice variant" id="VSP_000151" description="In isoform 5." evidence="9 10">
    <original>MKLLARALRLCEFGRQASSRRLVAGQGCVGPRRGCCAPVQVVGPRADLPPCGACITGR</original>
    <variation>MLLLRRSLSLNVLRKEVDRACFGEKAKQ</variation>
    <location>
        <begin position="1"/>
        <end position="58"/>
    </location>
</feature>
<feature type="splice variant" id="VSP_000152" description="In isoform 2, isoform 3 and isoform 4." evidence="8 9 10 11 12 13">
    <original>MKLLARALRLCEFGRQASSRRLVAGQGCVGPRRGCCAPVQVVGPRADLPPCGACITG</original>
    <variation>MSGPDVETPSAIQIC</variation>
    <location>
        <begin position="1"/>
        <end position="57"/>
    </location>
</feature>
<feature type="splice variant" id="VSP_000153" description="In isoform 6." evidence="9 10">
    <original>MKLLARALRLCEFGRQASSRRLVAGQGCVGPRRGCCAPVQVVGPRADLPPCGACITG</original>
    <variation>MAFQLS</variation>
    <location>
        <begin position="1"/>
        <end position="57"/>
    </location>
</feature>
<feature type="splice variant" id="VSP_047094" description="In isoform 7." evidence="10">
    <original>MKLLARALRLCEFGRQASSRRLVAGQGCVGPRRGCCAPVQVVGPRADLPPCGACITG</original>
    <variation>MARPGLIHSAPGLPDTCALLQPPAASAAAAPSMSGPDVETPSAIQIC</variation>
    <location>
        <begin position="1"/>
        <end position="57"/>
    </location>
</feature>
<feature type="splice variant" id="VSP_000154" description="In isoform 3." evidence="9">
    <original>GCVITISGRMTFTSNKSMEIEVLVDADPVVDSSQKRYRAASAFFTYVSLSQEGRSLPVPQLVPETEDEKKRFEEGKGRYLQMKAKRQGHAEPQP</original>
    <variation>AHVMPAGADHTAPSSSPSTGTKCSLLRHHHLGTHDLHEQ</variation>
    <location>
        <begin position="287"/>
        <end position="380"/>
    </location>
</feature>
<feature type="splice variant" id="VSP_000155" description="In isoform 2." evidence="9">
    <original>GC</original>
    <variation>AP</variation>
    <location>
        <begin position="287"/>
        <end position="288"/>
    </location>
</feature>
<feature type="splice variant" id="VSP_000156" description="In isoform 2." evidence="9">
    <location>
        <begin position="289"/>
        <end position="380"/>
    </location>
</feature>
<feature type="sequence conflict" description="In Ref. 5; BAG51874." evidence="14" ref="5">
    <original>E</original>
    <variation>G</variation>
    <location>
        <position position="82"/>
    </location>
</feature>
<feature type="sequence conflict" description="In Ref. 3; AAB61211." evidence="14" ref="3">
    <original>KR</original>
    <variation>DD</variation>
    <location>
        <begin position="371"/>
        <end position="372"/>
    </location>
</feature>
<feature type="sequence conflict" description="In Ref. 3; AAB61211." evidence="14" ref="3">
    <original>EP</original>
    <variation>DA</variation>
    <location>
        <begin position="377"/>
        <end position="378"/>
    </location>
</feature>
<feature type="helix" evidence="18">
    <location>
        <begin position="223"/>
        <end position="226"/>
    </location>
</feature>
<feature type="strand" evidence="18">
    <location>
        <begin position="228"/>
        <end position="233"/>
    </location>
</feature>
<feature type="helix" evidence="18">
    <location>
        <begin position="236"/>
        <end position="238"/>
    </location>
</feature>
<feature type="strand" evidence="18">
    <location>
        <begin position="241"/>
        <end position="245"/>
    </location>
</feature>
<feature type="helix" evidence="18">
    <location>
        <begin position="247"/>
        <end position="266"/>
    </location>
</feature>
<feature type="strand" evidence="18">
    <location>
        <begin position="267"/>
        <end position="280"/>
    </location>
</feature>
<feature type="strand" evidence="18">
    <location>
        <begin position="288"/>
        <end position="299"/>
    </location>
</feature>
<feature type="strand" evidence="18">
    <location>
        <begin position="301"/>
        <end position="314"/>
    </location>
</feature>
<feature type="strand" evidence="18">
    <location>
        <begin position="323"/>
        <end position="335"/>
    </location>
</feature>
<feature type="helix" evidence="18">
    <location>
        <begin position="352"/>
        <end position="371"/>
    </location>
</feature>
<gene>
    <name type="primary">ACOT7</name>
    <name type="synonym">BACH</name>
</gene>
<evidence type="ECO:0000250" key="1"/>
<evidence type="ECO:0000250" key="2">
    <source>
        <dbReference type="UniProtKB" id="Q64559"/>
    </source>
</evidence>
<evidence type="ECO:0000250" key="3">
    <source>
        <dbReference type="UniProtKB" id="Q91V12"/>
    </source>
</evidence>
<evidence type="ECO:0000255" key="4">
    <source>
        <dbReference type="PROSITE-ProRule" id="PRU01106"/>
    </source>
</evidence>
<evidence type="ECO:0000256" key="5">
    <source>
        <dbReference type="SAM" id="MobiDB-lite"/>
    </source>
</evidence>
<evidence type="ECO:0000269" key="6">
    <source>
    </source>
</evidence>
<evidence type="ECO:0000269" key="7">
    <source>
    </source>
</evidence>
<evidence type="ECO:0000303" key="8">
    <source>
    </source>
</evidence>
<evidence type="ECO:0000303" key="9">
    <source>
    </source>
</evidence>
<evidence type="ECO:0000303" key="10">
    <source>
    </source>
</evidence>
<evidence type="ECO:0000303" key="11">
    <source>
    </source>
</evidence>
<evidence type="ECO:0000303" key="12">
    <source ref="3"/>
</evidence>
<evidence type="ECO:0000303" key="13">
    <source ref="4"/>
</evidence>
<evidence type="ECO:0000305" key="14"/>
<evidence type="ECO:0000305" key="15">
    <source>
    </source>
</evidence>
<evidence type="ECO:0000305" key="16">
    <source>
    </source>
</evidence>
<evidence type="ECO:0007744" key="17">
    <source>
    </source>
</evidence>
<evidence type="ECO:0007829" key="18">
    <source>
        <dbReference type="PDB" id="2QQ2"/>
    </source>
</evidence>
<proteinExistence type="evidence at protein level"/>
<accession>O00154</accession>
<accession>A8K0K7</accession>
<accession>A8K232</accession>
<accession>A8K6B8</accession>
<accession>A8K837</accession>
<accession>B3KQ12</accession>
<accession>O43703</accession>
<accession>Q53Y78</accession>
<accession>Q5JYL2</accession>
<accession>Q5JYL3</accession>
<accession>Q5JYL4</accession>
<accession>Q5JYL5</accession>
<accession>Q5JYL6</accession>
<accession>Q5TGR4</accession>
<accession>Q9UJM9</accession>
<accession>Q9Y539</accession>
<accession>Q9Y540</accession>
<comment type="function">
    <text evidence="6">Catalyzes the hydrolysis of acyl-CoAs into free fatty acids and coenzyme A (CoASH), regulating their respective intracellular levels (PubMed:10578051). Preferentially hydrolyzes palmitoyl-CoA, but has a broad specificity acting on other fatty acyl-CoAs with chain-lengths of C8-C18 (PubMed:10578051). May play an important physiological function in brain (PubMed:10578051).</text>
</comment>
<comment type="catalytic activity">
    <reaction evidence="6">
        <text>hexadecanoyl-CoA + H2O = hexadecanoate + CoA + H(+)</text>
        <dbReference type="Rhea" id="RHEA:16645"/>
        <dbReference type="ChEBI" id="CHEBI:7896"/>
        <dbReference type="ChEBI" id="CHEBI:15377"/>
        <dbReference type="ChEBI" id="CHEBI:15378"/>
        <dbReference type="ChEBI" id="CHEBI:57287"/>
        <dbReference type="ChEBI" id="CHEBI:57379"/>
        <dbReference type="EC" id="3.1.2.2"/>
    </reaction>
    <physiologicalReaction direction="left-to-right" evidence="15">
        <dbReference type="Rhea" id="RHEA:16646"/>
    </physiologicalReaction>
</comment>
<comment type="catalytic activity">
    <reaction evidence="15">
        <text>octanoyl-CoA + H2O = octanoate + CoA + H(+)</text>
        <dbReference type="Rhea" id="RHEA:30143"/>
        <dbReference type="ChEBI" id="CHEBI:15377"/>
        <dbReference type="ChEBI" id="CHEBI:15378"/>
        <dbReference type="ChEBI" id="CHEBI:25646"/>
        <dbReference type="ChEBI" id="CHEBI:57287"/>
        <dbReference type="ChEBI" id="CHEBI:57386"/>
    </reaction>
    <physiologicalReaction direction="left-to-right" evidence="15">
        <dbReference type="Rhea" id="RHEA:30144"/>
    </physiologicalReaction>
</comment>
<comment type="catalytic activity">
    <reaction evidence="15">
        <text>dodecanoyl-CoA + H2O = dodecanoate + CoA + H(+)</text>
        <dbReference type="Rhea" id="RHEA:30135"/>
        <dbReference type="ChEBI" id="CHEBI:15377"/>
        <dbReference type="ChEBI" id="CHEBI:15378"/>
        <dbReference type="ChEBI" id="CHEBI:18262"/>
        <dbReference type="ChEBI" id="CHEBI:57287"/>
        <dbReference type="ChEBI" id="CHEBI:57375"/>
    </reaction>
    <physiologicalReaction direction="left-to-right" evidence="15">
        <dbReference type="Rhea" id="RHEA:30136"/>
    </physiologicalReaction>
</comment>
<comment type="catalytic activity">
    <reaction evidence="15">
        <text>(9Z)-octadecenoyl-CoA + H2O = (9Z)-octadecenoate + CoA + H(+)</text>
        <dbReference type="Rhea" id="RHEA:40139"/>
        <dbReference type="ChEBI" id="CHEBI:15377"/>
        <dbReference type="ChEBI" id="CHEBI:15378"/>
        <dbReference type="ChEBI" id="CHEBI:30823"/>
        <dbReference type="ChEBI" id="CHEBI:57287"/>
        <dbReference type="ChEBI" id="CHEBI:57387"/>
    </reaction>
    <physiologicalReaction direction="left-to-right" evidence="15">
        <dbReference type="Rhea" id="RHEA:40140"/>
    </physiologicalReaction>
</comment>
<comment type="catalytic activity">
    <reaction evidence="2">
        <text>tetradecanoyl-CoA + H2O = tetradecanoate + CoA + H(+)</text>
        <dbReference type="Rhea" id="RHEA:40119"/>
        <dbReference type="ChEBI" id="CHEBI:15377"/>
        <dbReference type="ChEBI" id="CHEBI:15378"/>
        <dbReference type="ChEBI" id="CHEBI:30807"/>
        <dbReference type="ChEBI" id="CHEBI:57287"/>
        <dbReference type="ChEBI" id="CHEBI:57385"/>
    </reaction>
    <physiologicalReaction direction="left-to-right" evidence="2">
        <dbReference type="Rhea" id="RHEA:40120"/>
    </physiologicalReaction>
</comment>
<comment type="catalytic activity">
    <reaction evidence="2">
        <text>decanoyl-CoA + H2O = decanoate + CoA + H(+)</text>
        <dbReference type="Rhea" id="RHEA:40059"/>
        <dbReference type="ChEBI" id="CHEBI:15377"/>
        <dbReference type="ChEBI" id="CHEBI:15378"/>
        <dbReference type="ChEBI" id="CHEBI:27689"/>
        <dbReference type="ChEBI" id="CHEBI:57287"/>
        <dbReference type="ChEBI" id="CHEBI:61430"/>
    </reaction>
    <physiologicalReaction direction="left-to-right" evidence="2">
        <dbReference type="Rhea" id="RHEA:40060"/>
    </physiologicalReaction>
</comment>
<comment type="catalytic activity">
    <reaction evidence="2">
        <text>octadecanoyl-CoA + H2O = octadecanoate + CoA + H(+)</text>
        <dbReference type="Rhea" id="RHEA:30139"/>
        <dbReference type="ChEBI" id="CHEBI:15377"/>
        <dbReference type="ChEBI" id="CHEBI:15378"/>
        <dbReference type="ChEBI" id="CHEBI:25629"/>
        <dbReference type="ChEBI" id="CHEBI:57287"/>
        <dbReference type="ChEBI" id="CHEBI:57394"/>
    </reaction>
    <physiologicalReaction direction="left-to-right" evidence="2">
        <dbReference type="Rhea" id="RHEA:30140"/>
    </physiologicalReaction>
</comment>
<comment type="pathway">
    <text evidence="15">Lipid metabolism; fatty acid metabolism.</text>
</comment>
<comment type="subunit">
    <text evidence="3">Homohexamer.</text>
</comment>
<comment type="interaction">
    <interactant intactId="EBI-948905">
        <id>O00154</id>
    </interactant>
    <interactant intactId="EBI-941975">
        <id>Q01484</id>
        <label>ANK2</label>
    </interactant>
    <organismsDiffer>false</organismsDiffer>
    <experiments>2</experiments>
</comment>
<comment type="interaction">
    <interactant intactId="EBI-948905">
        <id>O00154</id>
    </interactant>
    <interactant intactId="EBI-1058722">
        <id>Q13554</id>
        <label>CAMK2B</label>
    </interactant>
    <organismsDiffer>false</organismsDiffer>
    <experiments>3</experiments>
</comment>
<comment type="interaction">
    <interactant intactId="EBI-948905">
        <id>O00154</id>
    </interactant>
    <interactant intactId="EBI-1169146">
        <id>Q9HCK8</id>
        <label>CHD8</label>
    </interactant>
    <organismsDiffer>false</organismsDiffer>
    <experiments>2</experiments>
</comment>
<comment type="interaction">
    <interactant intactId="EBI-948905">
        <id>O00154</id>
    </interactant>
    <interactant intactId="EBI-456129">
        <id>Q13618</id>
        <label>CUL3</label>
    </interactant>
    <organismsDiffer>false</organismsDiffer>
    <experiments>2</experiments>
</comment>
<comment type="interaction">
    <interactant intactId="EBI-948905">
        <id>O00154</id>
    </interactant>
    <interactant intactId="EBI-366305">
        <id>Q06787</id>
        <label>FMR1</label>
    </interactant>
    <organismsDiffer>false</organismsDiffer>
    <experiments>2</experiments>
</comment>
<comment type="interaction">
    <interactant intactId="EBI-948905">
        <id>O00154</id>
    </interactant>
    <interactant intactId="EBI-10178933">
        <id>V9HW27</id>
        <label>HEL-S-101</label>
    </interactant>
    <organismsDiffer>false</organismsDiffer>
    <experiments>3</experiments>
</comment>
<comment type="interaction">
    <interactant intactId="EBI-948905">
        <id>O00154</id>
    </interactant>
    <interactant intactId="EBI-1045155">
        <id>P43360</id>
        <label>MAGEA6</label>
    </interactant>
    <organismsDiffer>false</organismsDiffer>
    <experiments>3</experiments>
</comment>
<comment type="interaction">
    <interactant intactId="EBI-948905">
        <id>O00154</id>
    </interactant>
    <interactant intactId="EBI-741515">
        <id>Q9NVV9</id>
        <label>THAP1</label>
    </interactant>
    <organismsDiffer>false</organismsDiffer>
    <experiments>3</experiments>
</comment>
<comment type="interaction">
    <interactant intactId="EBI-948905">
        <id>O00154</id>
    </interactant>
    <interactant intactId="EBI-741480">
        <id>Q9UMX0</id>
        <label>UBQLN1</label>
    </interactant>
    <organismsDiffer>false</organismsDiffer>
    <experiments>3</experiments>
</comment>
<comment type="interaction">
    <interactant intactId="EBI-948905">
        <id>O00154</id>
    </interactant>
    <interactant intactId="EBI-10173939">
        <id>Q9UMX0-2</id>
        <label>UBQLN1</label>
    </interactant>
    <organismsDiffer>false</organismsDiffer>
    <experiments>3</experiments>
</comment>
<comment type="interaction">
    <interactant intactId="EBI-12007918">
        <id>O00154-4</id>
    </interactant>
    <interactant intactId="EBI-11954993">
        <id>Q8WYK0</id>
        <label>ACOT12</label>
    </interactant>
    <organismsDiffer>false</organismsDiffer>
    <experiments>3</experiments>
</comment>
<comment type="interaction">
    <interactant intactId="EBI-12007918">
        <id>O00154-4</id>
    </interactant>
    <interactant intactId="EBI-2949658">
        <id>O95429</id>
        <label>BAG4</label>
    </interactant>
    <organismsDiffer>false</organismsDiffer>
    <experiments>3</experiments>
</comment>
<comment type="interaction">
    <interactant intactId="EBI-12007918">
        <id>O00154-4</id>
    </interactant>
    <interactant intactId="EBI-11523526">
        <id>Q13554-3</id>
        <label>CAMK2B</label>
    </interactant>
    <organismsDiffer>false</organismsDiffer>
    <experiments>3</experiments>
</comment>
<comment type="interaction">
    <interactant intactId="EBI-12007918">
        <id>O00154-4</id>
    </interactant>
    <interactant intactId="EBI-724310">
        <id>Q15038</id>
        <label>DAZAP2</label>
    </interactant>
    <organismsDiffer>false</organismsDiffer>
    <experiments>3</experiments>
</comment>
<comment type="interaction">
    <interactant intactId="EBI-12007918">
        <id>O00154-4</id>
    </interactant>
    <interactant intactId="EBI-739870">
        <id>P32321</id>
        <label>DCTD</label>
    </interactant>
    <organismsDiffer>false</organismsDiffer>
    <experiments>3</experiments>
</comment>
<comment type="interaction">
    <interactant intactId="EBI-12007918">
        <id>O00154-4</id>
    </interactant>
    <interactant intactId="EBI-744099">
        <id>Q9H0I2</id>
        <label>ENKD1</label>
    </interactant>
    <organismsDiffer>false</organismsDiffer>
    <experiments>3</experiments>
</comment>
<comment type="interaction">
    <interactant intactId="EBI-12007918">
        <id>O00154-4</id>
    </interactant>
    <interactant intactId="EBI-5651459">
        <id>P43357</id>
        <label>MAGEA3</label>
    </interactant>
    <organismsDiffer>false</organismsDiffer>
    <experiments>3</experiments>
</comment>
<comment type="interaction">
    <interactant intactId="EBI-12007918">
        <id>O00154-4</id>
    </interactant>
    <interactant intactId="EBI-1045155">
        <id>P43360</id>
        <label>MAGEA6</label>
    </interactant>
    <organismsDiffer>false</organismsDiffer>
    <experiments>3</experiments>
</comment>
<comment type="interaction">
    <interactant intactId="EBI-12007918">
        <id>O00154-4</id>
    </interactant>
    <interactant intactId="EBI-18138148">
        <id>Q14863</id>
        <label>POU6F1</label>
    </interactant>
    <organismsDiffer>false</organismsDiffer>
    <experiments>3</experiments>
</comment>
<comment type="interaction">
    <interactant intactId="EBI-12007918">
        <id>O00154-4</id>
    </interactant>
    <interactant intactId="EBI-11995806">
        <id>Q9H0A9-2</id>
        <label>SPATC1L</label>
    </interactant>
    <organismsDiffer>false</organismsDiffer>
    <experiments>3</experiments>
</comment>
<comment type="interaction">
    <interactant intactId="EBI-12007918">
        <id>O00154-4</id>
    </interactant>
    <interactant intactId="EBI-741515">
        <id>Q9NVV9</id>
        <label>THAP1</label>
    </interactant>
    <organismsDiffer>false</organismsDiffer>
    <experiments>3</experiments>
</comment>
<comment type="interaction">
    <interactant intactId="EBI-12007918">
        <id>O00154-4</id>
    </interactant>
    <interactant intactId="EBI-741480">
        <id>Q9UMX0</id>
        <label>UBQLN1</label>
    </interactant>
    <organismsDiffer>false</organismsDiffer>
    <experiments>3</experiments>
</comment>
<comment type="interaction">
    <interactant intactId="EBI-12007918">
        <id>O00154-4</id>
    </interactant>
    <interactant intactId="EBI-947187">
        <id>Q9UHD9</id>
        <label>UBQLN2</label>
    </interactant>
    <organismsDiffer>false</organismsDiffer>
    <experiments>3</experiments>
</comment>
<comment type="interaction">
    <interactant intactId="EBI-12007918">
        <id>O00154-4</id>
    </interactant>
    <interactant intactId="EBI-11530712">
        <id>Q04323-2</id>
        <label>UBXN1</label>
    </interactant>
    <organismsDiffer>false</organismsDiffer>
    <experiments>3</experiments>
</comment>
<comment type="interaction">
    <interactant intactId="EBI-12007918">
        <id>O00154-4</id>
    </interactant>
    <interactant intactId="EBI-11962468">
        <id>Q7Z4V0</id>
        <label>ZNF438</label>
    </interactant>
    <organismsDiffer>false</organismsDiffer>
    <experiments>3</experiments>
</comment>
<comment type="subcellular location">
    <molecule>Isoform 4</molecule>
    <subcellularLocation>
        <location evidence="16">Cytoplasm</location>
        <location evidence="16">Cytosol</location>
    </subcellularLocation>
</comment>
<comment type="subcellular location">
    <molecule>Isoform 6</molecule>
    <subcellularLocation>
        <location evidence="16">Cytoplasm</location>
        <location evidence="16">Cytosol</location>
    </subcellularLocation>
</comment>
<comment type="subcellular location">
    <molecule>Isoform 1</molecule>
    <subcellularLocation>
        <location evidence="7">Mitochondrion</location>
    </subcellularLocation>
</comment>
<comment type="subcellular location">
    <molecule>Isoform 5</molecule>
    <subcellularLocation>
        <location evidence="7">Mitochondrion</location>
    </subcellularLocation>
</comment>
<comment type="alternative products">
    <event type="alternative splicing"/>
    <isoform>
        <id>O00154-1</id>
        <name>1</name>
        <name>B</name>
        <name>HBACHb</name>
        <sequence type="displayed"/>
    </isoform>
    <isoform>
        <id>O00154-2</id>
        <name>2</name>
        <name>A-X</name>
        <name>hBACHa-X</name>
        <sequence type="described" ref="VSP_000152 VSP_000155 VSP_000156"/>
    </isoform>
    <isoform>
        <id>O00154-3</id>
        <name>3</name>
        <name>A-Xi</name>
        <name>hBACHa-Xi</name>
        <sequence type="described" ref="VSP_000152 VSP_000154"/>
    </isoform>
    <isoform>
        <id>O00154-4</id>
        <name>4</name>
        <name>A</name>
        <name>hBACHa</name>
        <sequence type="described" ref="VSP_000152"/>
    </isoform>
    <isoform>
        <id>O00154-5</id>
        <name>5</name>
        <name>C</name>
        <name>hBACHc</name>
        <sequence type="described" ref="VSP_000151"/>
    </isoform>
    <isoform>
        <id>O00154-6</id>
        <name>6</name>
        <name>D</name>
        <name>hBACHd</name>
        <sequence type="described" ref="VSP_000153"/>
    </isoform>
    <isoform>
        <id>O00154-7</id>
        <name>7</name>
        <sequence type="described" ref="VSP_047094"/>
    </isoform>
</comment>
<comment type="tissue specificity">
    <text evidence="7">Isoform 4 is expressed exclusively in brain.</text>
</comment>
<comment type="domain">
    <text evidence="1">Both HotDog ACOT-type hydrolase domains are required for efficient activity.</text>
</comment>
<comment type="miscellaneous">
    <molecule>Isoform 4</molecule>
    <text evidence="14">Major isoform.</text>
</comment>
<comment type="sequence caution" evidence="14">
    <conflict type="frameshift">
        <sequence resource="EMBL-CDS" id="AAB61211"/>
    </conflict>
</comment>
<comment type="sequence caution" evidence="14">
    <conflict type="erroneous initiation">
        <sequence resource="EMBL-CDS" id="AAH17365"/>
    </conflict>
</comment>